<reference key="1">
    <citation type="submission" date="2007-11" db="EMBL/GenBank/DDBJ databases">
        <title>Complete sequence of chromosome of Shewanella baltica OS195.</title>
        <authorList>
            <consortium name="US DOE Joint Genome Institute"/>
            <person name="Copeland A."/>
            <person name="Lucas S."/>
            <person name="Lapidus A."/>
            <person name="Barry K."/>
            <person name="Glavina del Rio T."/>
            <person name="Dalin E."/>
            <person name="Tice H."/>
            <person name="Pitluck S."/>
            <person name="Chain P."/>
            <person name="Malfatti S."/>
            <person name="Shin M."/>
            <person name="Vergez L."/>
            <person name="Schmutz J."/>
            <person name="Larimer F."/>
            <person name="Land M."/>
            <person name="Hauser L."/>
            <person name="Kyrpides N."/>
            <person name="Kim E."/>
            <person name="Brettar I."/>
            <person name="Rodrigues J."/>
            <person name="Konstantinidis K."/>
            <person name="Klappenbach J."/>
            <person name="Hofle M."/>
            <person name="Tiedje J."/>
            <person name="Richardson P."/>
        </authorList>
    </citation>
    <scope>NUCLEOTIDE SEQUENCE [LARGE SCALE GENOMIC DNA]</scope>
    <source>
        <strain>OS195</strain>
    </source>
</reference>
<evidence type="ECO:0000255" key="1">
    <source>
        <dbReference type="HAMAP-Rule" id="MF_00117"/>
    </source>
</evidence>
<accession>A9KVC8</accession>
<dbReference type="EMBL" id="CP000891">
    <property type="protein sequence ID" value="ABX47332.1"/>
    <property type="molecule type" value="Genomic_DNA"/>
</dbReference>
<dbReference type="RefSeq" id="WP_006084926.1">
    <property type="nucleotide sequence ID" value="NC_009997.1"/>
</dbReference>
<dbReference type="SMR" id="A9KVC8"/>
<dbReference type="GeneID" id="11770510"/>
<dbReference type="KEGG" id="sbn:Sbal195_0150"/>
<dbReference type="HOGENOM" id="CLU_054493_0_0_6"/>
<dbReference type="Proteomes" id="UP000000770">
    <property type="component" value="Chromosome"/>
</dbReference>
<dbReference type="GO" id="GO:0005737">
    <property type="term" value="C:cytoplasm"/>
    <property type="evidence" value="ECO:0007669"/>
    <property type="project" value="UniProtKB-SubCell"/>
</dbReference>
<dbReference type="GO" id="GO:0044183">
    <property type="term" value="F:protein folding chaperone"/>
    <property type="evidence" value="ECO:0007669"/>
    <property type="project" value="TreeGrafter"/>
</dbReference>
<dbReference type="GO" id="GO:0051082">
    <property type="term" value="F:unfolded protein binding"/>
    <property type="evidence" value="ECO:0007669"/>
    <property type="project" value="UniProtKB-UniRule"/>
</dbReference>
<dbReference type="GO" id="GO:0042026">
    <property type="term" value="P:protein refolding"/>
    <property type="evidence" value="ECO:0007669"/>
    <property type="project" value="TreeGrafter"/>
</dbReference>
<dbReference type="CDD" id="cd00498">
    <property type="entry name" value="Hsp33"/>
    <property type="match status" value="1"/>
</dbReference>
<dbReference type="Gene3D" id="1.10.287.480">
    <property type="entry name" value="helix hairpin bin"/>
    <property type="match status" value="1"/>
</dbReference>
<dbReference type="Gene3D" id="3.55.30.10">
    <property type="entry name" value="Hsp33 domain"/>
    <property type="match status" value="1"/>
</dbReference>
<dbReference type="Gene3D" id="3.90.1280.10">
    <property type="entry name" value="HSP33 redox switch-like"/>
    <property type="match status" value="1"/>
</dbReference>
<dbReference type="HAMAP" id="MF_00117">
    <property type="entry name" value="HslO"/>
    <property type="match status" value="1"/>
</dbReference>
<dbReference type="InterPro" id="IPR000397">
    <property type="entry name" value="Heat_shock_Hsp33"/>
</dbReference>
<dbReference type="InterPro" id="IPR016154">
    <property type="entry name" value="Heat_shock_Hsp33_C"/>
</dbReference>
<dbReference type="InterPro" id="IPR016153">
    <property type="entry name" value="Heat_shock_Hsp33_N"/>
</dbReference>
<dbReference type="InterPro" id="IPR023212">
    <property type="entry name" value="Hsp33_helix_hairpin_bin_dom_sf"/>
</dbReference>
<dbReference type="NCBIfam" id="NF001033">
    <property type="entry name" value="PRK00114.1"/>
    <property type="match status" value="1"/>
</dbReference>
<dbReference type="PANTHER" id="PTHR30111">
    <property type="entry name" value="33 KDA CHAPERONIN"/>
    <property type="match status" value="1"/>
</dbReference>
<dbReference type="PANTHER" id="PTHR30111:SF1">
    <property type="entry name" value="33 KDA CHAPERONIN"/>
    <property type="match status" value="1"/>
</dbReference>
<dbReference type="Pfam" id="PF01430">
    <property type="entry name" value="HSP33"/>
    <property type="match status" value="1"/>
</dbReference>
<dbReference type="PIRSF" id="PIRSF005261">
    <property type="entry name" value="Heat_shock_Hsp33"/>
    <property type="match status" value="1"/>
</dbReference>
<dbReference type="SUPFAM" id="SSF64397">
    <property type="entry name" value="Hsp33 domain"/>
    <property type="match status" value="1"/>
</dbReference>
<dbReference type="SUPFAM" id="SSF118352">
    <property type="entry name" value="HSP33 redox switch-like"/>
    <property type="match status" value="1"/>
</dbReference>
<sequence>MNQDTLHRYLFDNADVRGELVQLQDSYQQVISAQEYPAVLQVLLGELMAATSLLTATLKFSGDISVQLQGNGPVSLAVINGNNLQELRGVARWNAELADDASLTDLFGQGYMVITLTPDEGERYQGVVALDKPTLAACVEEYFNQSEQLPTGIWLFADGKQAAGMFLQILPSKEDHNPDFEHLSQLTSTIKAEELFTLDAESVLHRLYHQEEVRLFDPIDVSFKCTCSHERSAGAIKTLDQAEIEAILAEDGKIEMGCEYCHAKYIFDAIDVAALFANGQTSTTQQ</sequence>
<feature type="chain" id="PRO_1000076085" description="33 kDa chaperonin">
    <location>
        <begin position="1"/>
        <end position="286"/>
    </location>
</feature>
<feature type="disulfide bond" description="Redox-active" evidence="1">
    <location>
        <begin position="225"/>
        <end position="227"/>
    </location>
</feature>
<feature type="disulfide bond" description="Redox-active" evidence="1">
    <location>
        <begin position="258"/>
        <end position="261"/>
    </location>
</feature>
<proteinExistence type="inferred from homology"/>
<gene>
    <name evidence="1" type="primary">hslO</name>
    <name type="ordered locus">Sbal195_0150</name>
</gene>
<name>HSLO_SHEB9</name>
<organism>
    <name type="scientific">Shewanella baltica (strain OS195)</name>
    <dbReference type="NCBI Taxonomy" id="399599"/>
    <lineage>
        <taxon>Bacteria</taxon>
        <taxon>Pseudomonadati</taxon>
        <taxon>Pseudomonadota</taxon>
        <taxon>Gammaproteobacteria</taxon>
        <taxon>Alteromonadales</taxon>
        <taxon>Shewanellaceae</taxon>
        <taxon>Shewanella</taxon>
    </lineage>
</organism>
<comment type="function">
    <text evidence="1">Redox regulated molecular chaperone. Protects both thermally unfolding and oxidatively damaged proteins from irreversible aggregation. Plays an important role in the bacterial defense system toward oxidative stress.</text>
</comment>
<comment type="subcellular location">
    <subcellularLocation>
        <location evidence="1">Cytoplasm</location>
    </subcellularLocation>
</comment>
<comment type="PTM">
    <text evidence="1">Under oxidizing conditions two disulfide bonds are formed involving the reactive cysteines. Under reducing conditions zinc is bound to the reactive cysteines and the protein is inactive.</text>
</comment>
<comment type="similarity">
    <text evidence="1">Belongs to the HSP33 family.</text>
</comment>
<keyword id="KW-0143">Chaperone</keyword>
<keyword id="KW-0963">Cytoplasm</keyword>
<keyword id="KW-1015">Disulfide bond</keyword>
<keyword id="KW-0676">Redox-active center</keyword>
<keyword id="KW-0862">Zinc</keyword>
<protein>
    <recommendedName>
        <fullName evidence="1">33 kDa chaperonin</fullName>
    </recommendedName>
    <alternativeName>
        <fullName evidence="1">Heat shock protein 33 homolog</fullName>
        <shortName evidence="1">HSP33</shortName>
    </alternativeName>
</protein>